<protein>
    <recommendedName>
        <fullName evidence="1">Probable 5-dehydro-4-deoxyglucarate dehydratase</fullName>
        <ecNumber evidence="1">4.2.1.41</ecNumber>
    </recommendedName>
    <alternativeName>
        <fullName evidence="1">5-keto-4-deoxy-glucarate dehydratase</fullName>
        <shortName evidence="1">KDGDH</shortName>
    </alternativeName>
</protein>
<proteinExistence type="inferred from homology"/>
<dbReference type="EC" id="4.2.1.41" evidence="1"/>
<dbReference type="EMBL" id="CT573326">
    <property type="protein sequence ID" value="CAK15448.1"/>
    <property type="molecule type" value="Genomic_DNA"/>
</dbReference>
<dbReference type="RefSeq" id="WP_011533843.1">
    <property type="nucleotide sequence ID" value="NC_008027.1"/>
</dbReference>
<dbReference type="SMR" id="Q1IA73"/>
<dbReference type="STRING" id="384676.PSEEN2658"/>
<dbReference type="GeneID" id="32805806"/>
<dbReference type="KEGG" id="pen:PSEEN2658"/>
<dbReference type="eggNOG" id="COG0329">
    <property type="taxonomic scope" value="Bacteria"/>
</dbReference>
<dbReference type="HOGENOM" id="CLU_049343_5_2_6"/>
<dbReference type="OrthoDB" id="8995637at2"/>
<dbReference type="UniPathway" id="UPA00564">
    <property type="reaction ID" value="UER00628"/>
</dbReference>
<dbReference type="Proteomes" id="UP000000658">
    <property type="component" value="Chromosome"/>
</dbReference>
<dbReference type="GO" id="GO:0008840">
    <property type="term" value="F:4-hydroxy-tetrahydrodipicolinate synthase activity"/>
    <property type="evidence" value="ECO:0007669"/>
    <property type="project" value="TreeGrafter"/>
</dbReference>
<dbReference type="GO" id="GO:0047448">
    <property type="term" value="F:5-dehydro-4-deoxyglucarate dehydratase activity"/>
    <property type="evidence" value="ECO:0007669"/>
    <property type="project" value="UniProtKB-UniRule"/>
</dbReference>
<dbReference type="GO" id="GO:0042838">
    <property type="term" value="P:D-glucarate catabolic process"/>
    <property type="evidence" value="ECO:0007669"/>
    <property type="project" value="UniProtKB-UniRule"/>
</dbReference>
<dbReference type="CDD" id="cd00951">
    <property type="entry name" value="KDGDH"/>
    <property type="match status" value="1"/>
</dbReference>
<dbReference type="Gene3D" id="3.20.20.70">
    <property type="entry name" value="Aldolase class I"/>
    <property type="match status" value="1"/>
</dbReference>
<dbReference type="HAMAP" id="MF_00694">
    <property type="entry name" value="KDGDH"/>
    <property type="match status" value="1"/>
</dbReference>
<dbReference type="InterPro" id="IPR013785">
    <property type="entry name" value="Aldolase_TIM"/>
</dbReference>
<dbReference type="InterPro" id="IPR002220">
    <property type="entry name" value="DapA-like"/>
</dbReference>
<dbReference type="InterPro" id="IPR017655">
    <property type="entry name" value="Dehydro-deoxyglucarate_dehyd"/>
</dbReference>
<dbReference type="NCBIfam" id="TIGR03249">
    <property type="entry name" value="KdgD"/>
    <property type="match status" value="1"/>
</dbReference>
<dbReference type="NCBIfam" id="NF002958">
    <property type="entry name" value="PRK03620.1"/>
    <property type="match status" value="1"/>
</dbReference>
<dbReference type="PANTHER" id="PTHR12128:SF19">
    <property type="entry name" value="5-DEHYDRO-4-DEOXYGLUCARATE DEHYDRATASE 2-RELATED"/>
    <property type="match status" value="1"/>
</dbReference>
<dbReference type="PANTHER" id="PTHR12128">
    <property type="entry name" value="DIHYDRODIPICOLINATE SYNTHASE"/>
    <property type="match status" value="1"/>
</dbReference>
<dbReference type="Pfam" id="PF00701">
    <property type="entry name" value="DHDPS"/>
    <property type="match status" value="1"/>
</dbReference>
<dbReference type="PIRSF" id="PIRSF001365">
    <property type="entry name" value="DHDPS"/>
    <property type="match status" value="1"/>
</dbReference>
<dbReference type="SMART" id="SM01130">
    <property type="entry name" value="DHDPS"/>
    <property type="match status" value="1"/>
</dbReference>
<dbReference type="SUPFAM" id="SSF51569">
    <property type="entry name" value="Aldolase"/>
    <property type="match status" value="1"/>
</dbReference>
<feature type="chain" id="PRO_1000045407" description="Probable 5-dehydro-4-deoxyglucarate dehydratase">
    <location>
        <begin position="1"/>
        <end position="305"/>
    </location>
</feature>
<evidence type="ECO:0000255" key="1">
    <source>
        <dbReference type="HAMAP-Rule" id="MF_00694"/>
    </source>
</evidence>
<gene>
    <name type="ordered locus">PSEEN2658</name>
</gene>
<name>KDGD_PSEE4</name>
<comment type="catalytic activity">
    <reaction evidence="1">
        <text>5-dehydro-4-deoxy-D-glucarate + H(+) = 2,5-dioxopentanoate + CO2 + H2O</text>
        <dbReference type="Rhea" id="RHEA:24608"/>
        <dbReference type="ChEBI" id="CHEBI:15377"/>
        <dbReference type="ChEBI" id="CHEBI:15378"/>
        <dbReference type="ChEBI" id="CHEBI:16526"/>
        <dbReference type="ChEBI" id="CHEBI:42819"/>
        <dbReference type="ChEBI" id="CHEBI:58136"/>
        <dbReference type="EC" id="4.2.1.41"/>
    </reaction>
</comment>
<comment type="pathway">
    <text evidence="1">Carbohydrate acid metabolism; D-glucarate degradation; 2,5-dioxopentanoate from D-glucarate: step 2/2.</text>
</comment>
<comment type="similarity">
    <text evidence="1">Belongs to the DapA family.</text>
</comment>
<reference key="1">
    <citation type="journal article" date="2006" name="Nat. Biotechnol.">
        <title>Complete genome sequence of the entomopathogenic and metabolically versatile soil bacterium Pseudomonas entomophila.</title>
        <authorList>
            <person name="Vodovar N."/>
            <person name="Vallenet D."/>
            <person name="Cruveiller S."/>
            <person name="Rouy Z."/>
            <person name="Barbe V."/>
            <person name="Acosta C."/>
            <person name="Cattolico L."/>
            <person name="Jubin C."/>
            <person name="Lajus A."/>
            <person name="Segurens B."/>
            <person name="Vacherie B."/>
            <person name="Wincker P."/>
            <person name="Weissenbach J."/>
            <person name="Lemaitre B."/>
            <person name="Medigue C."/>
            <person name="Boccard F."/>
        </authorList>
    </citation>
    <scope>NUCLEOTIDE SEQUENCE [LARGE SCALE GENOMIC DNA]</scope>
    <source>
        <strain>L48</strain>
    </source>
</reference>
<accession>Q1IA73</accession>
<keyword id="KW-0456">Lyase</keyword>
<sequence length="305" mass="32856">MTPQELQSILSHGLLSFPVTDFDAQGDFNPAGYVKRLEWLAPYGASALFAAGGTGEFFSLAASEYSQVIKTAVDTCATSVPILAGVGGSTRQAIEYAKEAERLGAKGLLLLPHYLTEASQDGVAAHVEAVCKAVNIGVVVYNRNVCRLNADLLERLAERCPNLIGYKDGLGDIELMVSIRRRLGDRFSYLGGLPTAEVYAAAYKALGVPVYSSAVFNFVPKTAMDFYHAIARDDHATVAKLIDDFFLPYLDIRNRKAGYAVSIVKAGARIAGYDAGPVRTPLTDLTAQEYEMLAALMDKMGPQTV</sequence>
<organism>
    <name type="scientific">Pseudomonas entomophila (strain L48)</name>
    <dbReference type="NCBI Taxonomy" id="384676"/>
    <lineage>
        <taxon>Bacteria</taxon>
        <taxon>Pseudomonadati</taxon>
        <taxon>Pseudomonadota</taxon>
        <taxon>Gammaproteobacteria</taxon>
        <taxon>Pseudomonadales</taxon>
        <taxon>Pseudomonadaceae</taxon>
        <taxon>Pseudomonas</taxon>
    </lineage>
</organism>